<accession>Q39TA2</accession>
<evidence type="ECO:0000255" key="1">
    <source>
        <dbReference type="HAMAP-Rule" id="MF_00500"/>
    </source>
</evidence>
<evidence type="ECO:0000256" key="2">
    <source>
        <dbReference type="SAM" id="MobiDB-lite"/>
    </source>
</evidence>
<evidence type="ECO:0000305" key="3"/>
<protein>
    <recommendedName>
        <fullName evidence="1">Small ribosomal subunit protein bS20</fullName>
    </recommendedName>
    <alternativeName>
        <fullName evidence="3">30S ribosomal protein S20</fullName>
    </alternativeName>
</protein>
<organism>
    <name type="scientific">Geobacter metallireducens (strain ATCC 53774 / DSM 7210 / GS-15)</name>
    <dbReference type="NCBI Taxonomy" id="269799"/>
    <lineage>
        <taxon>Bacteria</taxon>
        <taxon>Pseudomonadati</taxon>
        <taxon>Thermodesulfobacteriota</taxon>
        <taxon>Desulfuromonadia</taxon>
        <taxon>Geobacterales</taxon>
        <taxon>Geobacteraceae</taxon>
        <taxon>Geobacter</taxon>
    </lineage>
</organism>
<reference key="1">
    <citation type="journal article" date="2009" name="BMC Microbiol.">
        <title>The genome sequence of Geobacter metallireducens: features of metabolism, physiology and regulation common and dissimilar to Geobacter sulfurreducens.</title>
        <authorList>
            <person name="Aklujkar M."/>
            <person name="Krushkal J."/>
            <person name="DiBartolo G."/>
            <person name="Lapidus A."/>
            <person name="Land M.L."/>
            <person name="Lovley D.R."/>
        </authorList>
    </citation>
    <scope>NUCLEOTIDE SEQUENCE [LARGE SCALE GENOMIC DNA]</scope>
    <source>
        <strain>ATCC 53774 / DSM 7210 / GS-15</strain>
    </source>
</reference>
<proteinExistence type="inferred from homology"/>
<sequence>MAHHKSALKRIKQNKRKQFRNKSIRSGLRTFIKNVREAVEAKDAAKAKEALQAAIPVIDKAATKGIIHANAASRNVSRLTKLVNTLG</sequence>
<keyword id="KW-1185">Reference proteome</keyword>
<keyword id="KW-0687">Ribonucleoprotein</keyword>
<keyword id="KW-0689">Ribosomal protein</keyword>
<keyword id="KW-0694">RNA-binding</keyword>
<keyword id="KW-0699">rRNA-binding</keyword>
<gene>
    <name evidence="1" type="primary">rpsT</name>
    <name type="ordered locus">Gmet_2297</name>
</gene>
<name>RS20_GEOMG</name>
<feature type="chain" id="PRO_0000236435" description="Small ribosomal subunit protein bS20">
    <location>
        <begin position="1"/>
        <end position="87"/>
    </location>
</feature>
<feature type="region of interest" description="Disordered" evidence="2">
    <location>
        <begin position="1"/>
        <end position="22"/>
    </location>
</feature>
<comment type="function">
    <text evidence="1">Binds directly to 16S ribosomal RNA.</text>
</comment>
<comment type="similarity">
    <text evidence="1">Belongs to the bacterial ribosomal protein bS20 family.</text>
</comment>
<dbReference type="EMBL" id="CP000148">
    <property type="protein sequence ID" value="ABB32522.1"/>
    <property type="molecule type" value="Genomic_DNA"/>
</dbReference>
<dbReference type="RefSeq" id="WP_004514501.1">
    <property type="nucleotide sequence ID" value="NC_007517.1"/>
</dbReference>
<dbReference type="SMR" id="Q39TA2"/>
<dbReference type="STRING" id="269799.Gmet_2297"/>
<dbReference type="KEGG" id="gme:Gmet_2297"/>
<dbReference type="eggNOG" id="COG0268">
    <property type="taxonomic scope" value="Bacteria"/>
</dbReference>
<dbReference type="HOGENOM" id="CLU_160655_3_1_7"/>
<dbReference type="Proteomes" id="UP000007073">
    <property type="component" value="Chromosome"/>
</dbReference>
<dbReference type="GO" id="GO:0005829">
    <property type="term" value="C:cytosol"/>
    <property type="evidence" value="ECO:0007669"/>
    <property type="project" value="TreeGrafter"/>
</dbReference>
<dbReference type="GO" id="GO:0015935">
    <property type="term" value="C:small ribosomal subunit"/>
    <property type="evidence" value="ECO:0007669"/>
    <property type="project" value="TreeGrafter"/>
</dbReference>
<dbReference type="GO" id="GO:0070181">
    <property type="term" value="F:small ribosomal subunit rRNA binding"/>
    <property type="evidence" value="ECO:0007669"/>
    <property type="project" value="TreeGrafter"/>
</dbReference>
<dbReference type="GO" id="GO:0003735">
    <property type="term" value="F:structural constituent of ribosome"/>
    <property type="evidence" value="ECO:0007669"/>
    <property type="project" value="InterPro"/>
</dbReference>
<dbReference type="GO" id="GO:0006412">
    <property type="term" value="P:translation"/>
    <property type="evidence" value="ECO:0007669"/>
    <property type="project" value="UniProtKB-UniRule"/>
</dbReference>
<dbReference type="FunFam" id="1.20.58.110:FF:000001">
    <property type="entry name" value="30S ribosomal protein S20"/>
    <property type="match status" value="1"/>
</dbReference>
<dbReference type="Gene3D" id="1.20.58.110">
    <property type="entry name" value="Ribosomal protein S20"/>
    <property type="match status" value="1"/>
</dbReference>
<dbReference type="HAMAP" id="MF_00500">
    <property type="entry name" value="Ribosomal_bS20"/>
    <property type="match status" value="1"/>
</dbReference>
<dbReference type="InterPro" id="IPR002583">
    <property type="entry name" value="Ribosomal_bS20"/>
</dbReference>
<dbReference type="InterPro" id="IPR036510">
    <property type="entry name" value="Ribosomal_bS20_sf"/>
</dbReference>
<dbReference type="NCBIfam" id="TIGR00029">
    <property type="entry name" value="S20"/>
    <property type="match status" value="1"/>
</dbReference>
<dbReference type="PANTHER" id="PTHR33398">
    <property type="entry name" value="30S RIBOSOMAL PROTEIN S20"/>
    <property type="match status" value="1"/>
</dbReference>
<dbReference type="PANTHER" id="PTHR33398:SF1">
    <property type="entry name" value="SMALL RIBOSOMAL SUBUNIT PROTEIN BS20C"/>
    <property type="match status" value="1"/>
</dbReference>
<dbReference type="Pfam" id="PF01649">
    <property type="entry name" value="Ribosomal_S20p"/>
    <property type="match status" value="1"/>
</dbReference>
<dbReference type="SUPFAM" id="SSF46992">
    <property type="entry name" value="Ribosomal protein S20"/>
    <property type="match status" value="1"/>
</dbReference>